<sequence>MEKFTIYTGTTVPLMNDNIDTDQILPKQFLKLIDKKGFGKYLMYSWRYKDNKYTEDPDFVFNRPEYRKATILITGDNFGAGSSREHAAWALADYGFKVVIAGSFGDIHYNNELNNGMLPIVQPIEVRRKLEQLKPTDEVTVDLEQQKIISPVGEFTFEIDGEWKHKLLNGLDDIGITMQYEDLITEYEKHRPSYWQ</sequence>
<name>LEUD_STRTD</name>
<gene>
    <name evidence="1" type="primary">leuD</name>
    <name type="ordered locus">STER_1167</name>
</gene>
<dbReference type="EC" id="4.2.1.33" evidence="1"/>
<dbReference type="EMBL" id="CP000419">
    <property type="protein sequence ID" value="ABJ66358.1"/>
    <property type="molecule type" value="Genomic_DNA"/>
</dbReference>
<dbReference type="RefSeq" id="WP_011226115.1">
    <property type="nucleotide sequence ID" value="NZ_CP086001.1"/>
</dbReference>
<dbReference type="SMR" id="Q03KB4"/>
<dbReference type="GeneID" id="66898993"/>
<dbReference type="KEGG" id="ste:STER_1167"/>
<dbReference type="HOGENOM" id="CLU_081378_0_3_9"/>
<dbReference type="UniPathway" id="UPA00048">
    <property type="reaction ID" value="UER00071"/>
</dbReference>
<dbReference type="GO" id="GO:0009316">
    <property type="term" value="C:3-isopropylmalate dehydratase complex"/>
    <property type="evidence" value="ECO:0007669"/>
    <property type="project" value="InterPro"/>
</dbReference>
<dbReference type="GO" id="GO:0003861">
    <property type="term" value="F:3-isopropylmalate dehydratase activity"/>
    <property type="evidence" value="ECO:0007669"/>
    <property type="project" value="UniProtKB-UniRule"/>
</dbReference>
<dbReference type="GO" id="GO:0009098">
    <property type="term" value="P:L-leucine biosynthetic process"/>
    <property type="evidence" value="ECO:0007669"/>
    <property type="project" value="UniProtKB-UniRule"/>
</dbReference>
<dbReference type="CDD" id="cd01577">
    <property type="entry name" value="IPMI_Swivel"/>
    <property type="match status" value="1"/>
</dbReference>
<dbReference type="FunFam" id="3.20.19.10:FF:000003">
    <property type="entry name" value="3-isopropylmalate dehydratase small subunit"/>
    <property type="match status" value="1"/>
</dbReference>
<dbReference type="Gene3D" id="3.20.19.10">
    <property type="entry name" value="Aconitase, domain 4"/>
    <property type="match status" value="1"/>
</dbReference>
<dbReference type="HAMAP" id="MF_01031">
    <property type="entry name" value="LeuD_type1"/>
    <property type="match status" value="1"/>
</dbReference>
<dbReference type="InterPro" id="IPR004431">
    <property type="entry name" value="3-IsopropMal_deHydase_ssu"/>
</dbReference>
<dbReference type="InterPro" id="IPR015928">
    <property type="entry name" value="Aconitase/3IPM_dehydase_swvl"/>
</dbReference>
<dbReference type="InterPro" id="IPR000573">
    <property type="entry name" value="AconitaseA/IPMdHydase_ssu_swvl"/>
</dbReference>
<dbReference type="InterPro" id="IPR033940">
    <property type="entry name" value="IPMI_Swivel"/>
</dbReference>
<dbReference type="InterPro" id="IPR050075">
    <property type="entry name" value="LeuD"/>
</dbReference>
<dbReference type="NCBIfam" id="TIGR00171">
    <property type="entry name" value="leuD"/>
    <property type="match status" value="1"/>
</dbReference>
<dbReference type="NCBIfam" id="NF002458">
    <property type="entry name" value="PRK01641.1"/>
    <property type="match status" value="1"/>
</dbReference>
<dbReference type="PANTHER" id="PTHR43345:SF5">
    <property type="entry name" value="3-ISOPROPYLMALATE DEHYDRATASE SMALL SUBUNIT"/>
    <property type="match status" value="1"/>
</dbReference>
<dbReference type="PANTHER" id="PTHR43345">
    <property type="entry name" value="3-ISOPROPYLMALATE DEHYDRATASE SMALL SUBUNIT 2-RELATED-RELATED"/>
    <property type="match status" value="1"/>
</dbReference>
<dbReference type="Pfam" id="PF00694">
    <property type="entry name" value="Aconitase_C"/>
    <property type="match status" value="1"/>
</dbReference>
<dbReference type="SUPFAM" id="SSF52016">
    <property type="entry name" value="LeuD/IlvD-like"/>
    <property type="match status" value="1"/>
</dbReference>
<organism>
    <name type="scientific">Streptococcus thermophilus (strain ATCC BAA-491 / LMD-9)</name>
    <dbReference type="NCBI Taxonomy" id="322159"/>
    <lineage>
        <taxon>Bacteria</taxon>
        <taxon>Bacillati</taxon>
        <taxon>Bacillota</taxon>
        <taxon>Bacilli</taxon>
        <taxon>Lactobacillales</taxon>
        <taxon>Streptococcaceae</taxon>
        <taxon>Streptococcus</taxon>
    </lineage>
</organism>
<evidence type="ECO:0000255" key="1">
    <source>
        <dbReference type="HAMAP-Rule" id="MF_01031"/>
    </source>
</evidence>
<proteinExistence type="inferred from homology"/>
<accession>Q03KB4</accession>
<comment type="function">
    <text evidence="1">Catalyzes the isomerization between 2-isopropylmalate and 3-isopropylmalate, via the formation of 2-isopropylmaleate.</text>
</comment>
<comment type="catalytic activity">
    <reaction evidence="1">
        <text>(2R,3S)-3-isopropylmalate = (2S)-2-isopropylmalate</text>
        <dbReference type="Rhea" id="RHEA:32287"/>
        <dbReference type="ChEBI" id="CHEBI:1178"/>
        <dbReference type="ChEBI" id="CHEBI:35121"/>
        <dbReference type="EC" id="4.2.1.33"/>
    </reaction>
</comment>
<comment type="pathway">
    <text evidence="1">Amino-acid biosynthesis; L-leucine biosynthesis; L-leucine from 3-methyl-2-oxobutanoate: step 2/4.</text>
</comment>
<comment type="subunit">
    <text evidence="1">Heterodimer of LeuC and LeuD.</text>
</comment>
<comment type="similarity">
    <text evidence="1">Belongs to the LeuD family. LeuD type 1 subfamily.</text>
</comment>
<feature type="chain" id="PRO_1000063854" description="3-isopropylmalate dehydratase small subunit">
    <location>
        <begin position="1"/>
        <end position="196"/>
    </location>
</feature>
<reference key="1">
    <citation type="journal article" date="2006" name="Proc. Natl. Acad. Sci. U.S.A.">
        <title>Comparative genomics of the lactic acid bacteria.</title>
        <authorList>
            <person name="Makarova K.S."/>
            <person name="Slesarev A."/>
            <person name="Wolf Y.I."/>
            <person name="Sorokin A."/>
            <person name="Mirkin B."/>
            <person name="Koonin E.V."/>
            <person name="Pavlov A."/>
            <person name="Pavlova N."/>
            <person name="Karamychev V."/>
            <person name="Polouchine N."/>
            <person name="Shakhova V."/>
            <person name="Grigoriev I."/>
            <person name="Lou Y."/>
            <person name="Rohksar D."/>
            <person name="Lucas S."/>
            <person name="Huang K."/>
            <person name="Goodstein D.M."/>
            <person name="Hawkins T."/>
            <person name="Plengvidhya V."/>
            <person name="Welker D."/>
            <person name="Hughes J."/>
            <person name="Goh Y."/>
            <person name="Benson A."/>
            <person name="Baldwin K."/>
            <person name="Lee J.-H."/>
            <person name="Diaz-Muniz I."/>
            <person name="Dosti B."/>
            <person name="Smeianov V."/>
            <person name="Wechter W."/>
            <person name="Barabote R."/>
            <person name="Lorca G."/>
            <person name="Altermann E."/>
            <person name="Barrangou R."/>
            <person name="Ganesan B."/>
            <person name="Xie Y."/>
            <person name="Rawsthorne H."/>
            <person name="Tamir D."/>
            <person name="Parker C."/>
            <person name="Breidt F."/>
            <person name="Broadbent J.R."/>
            <person name="Hutkins R."/>
            <person name="O'Sullivan D."/>
            <person name="Steele J."/>
            <person name="Unlu G."/>
            <person name="Saier M.H. Jr."/>
            <person name="Klaenhammer T."/>
            <person name="Richardson P."/>
            <person name="Kozyavkin S."/>
            <person name="Weimer B.C."/>
            <person name="Mills D.A."/>
        </authorList>
    </citation>
    <scope>NUCLEOTIDE SEQUENCE [LARGE SCALE GENOMIC DNA]</scope>
    <source>
        <strain>ATCC BAA-491 / LMD-9</strain>
    </source>
</reference>
<protein>
    <recommendedName>
        <fullName evidence="1">3-isopropylmalate dehydratase small subunit</fullName>
        <ecNumber evidence="1">4.2.1.33</ecNumber>
    </recommendedName>
    <alternativeName>
        <fullName evidence="1">Alpha-IPM isomerase</fullName>
        <shortName evidence="1">IPMI</shortName>
    </alternativeName>
    <alternativeName>
        <fullName evidence="1">Isopropylmalate isomerase</fullName>
    </alternativeName>
</protein>
<keyword id="KW-0028">Amino-acid biosynthesis</keyword>
<keyword id="KW-0100">Branched-chain amino acid biosynthesis</keyword>
<keyword id="KW-0432">Leucine biosynthesis</keyword>
<keyword id="KW-0456">Lyase</keyword>